<sequence length="201" mass="20951">MMTLKVAIGPQNAFVLRQGIRREYVLVIVALCGIADGALIAAGVGGFAALIHAHPNMTLVARFGGAAFLIGYALLAARNAWRPSGLVPSESGPAALIGVVQMCLVVTFLNPHVYLDTVVLIGALANEESDLRWFFGAGAWAASVVWFAVLGFSAGRLQPFFATPAAWRILDALVAVTMIGVAVVVLVTSPSVPTANVALII</sequence>
<comment type="subcellular location">
    <subcellularLocation>
        <location evidence="2">Cell membrane</location>
        <topology evidence="2">Multi-pass membrane protein</topology>
    </subcellularLocation>
</comment>
<comment type="similarity">
    <text evidence="2">Belongs to the LysE/ArgO transporter (TC 2.A.75) family.</text>
</comment>
<proteinExistence type="inferred from homology"/>
<organism>
    <name type="scientific">Mycobacterium tuberculosis (strain CDC 1551 / Oshkosh)</name>
    <dbReference type="NCBI Taxonomy" id="83331"/>
    <lineage>
        <taxon>Bacteria</taxon>
        <taxon>Bacillati</taxon>
        <taxon>Actinomycetota</taxon>
        <taxon>Actinomycetes</taxon>
        <taxon>Mycobacteriales</taxon>
        <taxon>Mycobacteriaceae</taxon>
        <taxon>Mycobacterium</taxon>
        <taxon>Mycobacterium tuberculosis complex</taxon>
    </lineage>
</organism>
<reference key="1">
    <citation type="journal article" date="2002" name="J. Bacteriol.">
        <title>Whole-genome comparison of Mycobacterium tuberculosis clinical and laboratory strains.</title>
        <authorList>
            <person name="Fleischmann R.D."/>
            <person name="Alland D."/>
            <person name="Eisen J.A."/>
            <person name="Carpenter L."/>
            <person name="White O."/>
            <person name="Peterson J.D."/>
            <person name="DeBoy R.T."/>
            <person name="Dodson R.J."/>
            <person name="Gwinn M.L."/>
            <person name="Haft D.H."/>
            <person name="Hickey E.K."/>
            <person name="Kolonay J.F."/>
            <person name="Nelson W.C."/>
            <person name="Umayam L.A."/>
            <person name="Ermolaeva M.D."/>
            <person name="Salzberg S.L."/>
            <person name="Delcher A."/>
            <person name="Utterback T.R."/>
            <person name="Weidman J.F."/>
            <person name="Khouri H.M."/>
            <person name="Gill J."/>
            <person name="Mikula A."/>
            <person name="Bishai W."/>
            <person name="Jacobs W.R. Jr."/>
            <person name="Venter J.C."/>
            <person name="Fraser C.M."/>
        </authorList>
    </citation>
    <scope>NUCLEOTIDE SEQUENCE [LARGE SCALE GENOMIC DNA]</scope>
    <source>
        <strain>CDC 1551 / Oshkosh</strain>
    </source>
</reference>
<dbReference type="EMBL" id="AE000516">
    <property type="protein sequence ID" value="AAK44730.1"/>
    <property type="molecule type" value="Genomic_DNA"/>
</dbReference>
<dbReference type="PIR" id="C70744">
    <property type="entry name" value="C70744"/>
</dbReference>
<dbReference type="KEGG" id="mtc:MT0507"/>
<dbReference type="PATRIC" id="fig|83331.31.peg.536"/>
<dbReference type="HOGENOM" id="CLU_087840_0_0_11"/>
<dbReference type="Proteomes" id="UP000001020">
    <property type="component" value="Chromosome"/>
</dbReference>
<dbReference type="GO" id="GO:0005886">
    <property type="term" value="C:plasma membrane"/>
    <property type="evidence" value="ECO:0007669"/>
    <property type="project" value="UniProtKB-SubCell"/>
</dbReference>
<dbReference type="GO" id="GO:0015171">
    <property type="term" value="F:amino acid transmembrane transporter activity"/>
    <property type="evidence" value="ECO:0007669"/>
    <property type="project" value="TreeGrafter"/>
</dbReference>
<dbReference type="InterPro" id="IPR001123">
    <property type="entry name" value="LeuE-type"/>
</dbReference>
<dbReference type="InterPro" id="IPR004777">
    <property type="entry name" value="Lys/arg_exporter"/>
</dbReference>
<dbReference type="NCBIfam" id="TIGR00948">
    <property type="entry name" value="2a75"/>
    <property type="match status" value="1"/>
</dbReference>
<dbReference type="PANTHER" id="PTHR30086">
    <property type="entry name" value="ARGININE EXPORTER PROTEIN ARGO"/>
    <property type="match status" value="1"/>
</dbReference>
<dbReference type="PANTHER" id="PTHR30086:SF20">
    <property type="entry name" value="ARGININE EXPORTER PROTEIN ARGO-RELATED"/>
    <property type="match status" value="1"/>
</dbReference>
<dbReference type="Pfam" id="PF01810">
    <property type="entry name" value="LysE"/>
    <property type="match status" value="1"/>
</dbReference>
<name>Y488_MYCTO</name>
<feature type="chain" id="PRO_0000427724" description="Putative amino-acid transporter MT0507">
    <location>
        <begin position="1"/>
        <end position="201"/>
    </location>
</feature>
<feature type="transmembrane region" description="Helical" evidence="1">
    <location>
        <begin position="25"/>
        <end position="45"/>
    </location>
</feature>
<feature type="transmembrane region" description="Helical" evidence="1">
    <location>
        <begin position="57"/>
        <end position="77"/>
    </location>
</feature>
<feature type="transmembrane region" description="Helical" evidence="1">
    <location>
        <begin position="104"/>
        <end position="124"/>
    </location>
</feature>
<feature type="transmembrane region" description="Helical" evidence="1">
    <location>
        <begin position="133"/>
        <end position="153"/>
    </location>
</feature>
<feature type="transmembrane region" description="Helical" evidence="1">
    <location>
        <begin position="169"/>
        <end position="189"/>
    </location>
</feature>
<keyword id="KW-0029">Amino-acid transport</keyword>
<keyword id="KW-1003">Cell membrane</keyword>
<keyword id="KW-0472">Membrane</keyword>
<keyword id="KW-1185">Reference proteome</keyword>
<keyword id="KW-0812">Transmembrane</keyword>
<keyword id="KW-1133">Transmembrane helix</keyword>
<keyword id="KW-0813">Transport</keyword>
<accession>P9WK32</accession>
<accession>L0T6U2</accession>
<accession>P64711</accession>
<accession>Q11154</accession>
<protein>
    <recommendedName>
        <fullName>Putative amino-acid transporter MT0507</fullName>
    </recommendedName>
</protein>
<evidence type="ECO:0000255" key="1"/>
<evidence type="ECO:0000305" key="2"/>
<gene>
    <name type="ordered locus">MT0507</name>
</gene>